<evidence type="ECO:0000250" key="1">
    <source>
        <dbReference type="UniProtKB" id="P00423"/>
    </source>
</evidence>
<evidence type="ECO:0000250" key="2">
    <source>
        <dbReference type="UniProtKB" id="P00424"/>
    </source>
</evidence>
<evidence type="ECO:0000269" key="3">
    <source>
    </source>
</evidence>
<evidence type="ECO:0000305" key="4"/>
<organism>
    <name type="scientific">Thunnus obesus</name>
    <name type="common">Bigeye tuna</name>
    <dbReference type="NCBI Taxonomy" id="8241"/>
    <lineage>
        <taxon>Eukaryota</taxon>
        <taxon>Metazoa</taxon>
        <taxon>Chordata</taxon>
        <taxon>Craniata</taxon>
        <taxon>Vertebrata</taxon>
        <taxon>Euteleostomi</taxon>
        <taxon>Actinopterygii</taxon>
        <taxon>Neopterygii</taxon>
        <taxon>Teleostei</taxon>
        <taxon>Neoteleostei</taxon>
        <taxon>Acanthomorphata</taxon>
        <taxon>Pelagiaria</taxon>
        <taxon>Scombriformes</taxon>
        <taxon>Scombridae</taxon>
        <taxon>Thunnus</taxon>
    </lineage>
</organism>
<feature type="transit peptide" description="Mitochondrion" evidence="3">
    <location>
        <begin position="1"/>
        <end position="28"/>
    </location>
</feature>
<feature type="chain" id="PRO_0000006093" description="Cytochrome c oxidase subunit 4 isoform 2, mitochondrial">
    <location>
        <begin position="29"/>
        <end position="176"/>
    </location>
</feature>
<feature type="topological domain" description="Mitochondrial matrix" evidence="1">
    <location>
        <begin position="29"/>
        <end position="106"/>
    </location>
</feature>
<feature type="transmembrane region" description="Helical" evidence="1">
    <location>
        <begin position="107"/>
        <end position="132"/>
    </location>
</feature>
<feature type="topological domain" description="Mitochondrial intermembrane" evidence="1">
    <location>
        <begin position="133"/>
        <end position="176"/>
    </location>
</feature>
<feature type="sequence conflict" description="In Ref. 2; AA sequence." evidence="4" ref="2">
    <original>L</original>
    <variation>H</variation>
    <location>
        <position position="33"/>
    </location>
</feature>
<keyword id="KW-0903">Direct protein sequencing</keyword>
<keyword id="KW-0472">Membrane</keyword>
<keyword id="KW-0496">Mitochondrion</keyword>
<keyword id="KW-0999">Mitochondrion inner membrane</keyword>
<keyword id="KW-0809">Transit peptide</keyword>
<keyword id="KW-0812">Transmembrane</keyword>
<keyword id="KW-1133">Transmembrane helix</keyword>
<protein>
    <recommendedName>
        <fullName>Cytochrome c oxidase subunit 4 isoform 2, mitochondrial</fullName>
    </recommendedName>
    <alternativeName>
        <fullName>Cytochrome c oxidase subunit IV isoform 2</fullName>
        <shortName>COX IV-2</shortName>
    </alternativeName>
</protein>
<reference key="1">
    <citation type="journal article" date="2000" name="Biochim. Biophys. Acta">
        <title>New isoforms of cytochrome c oxidase subunit IV in tuna fish.</title>
        <authorList>
            <person name="Huettemann M."/>
        </authorList>
    </citation>
    <scope>NUCLEOTIDE SEQUENCE [MRNA]</scope>
    <source>
        <tissue>Heart</tissue>
        <tissue>Liver</tissue>
        <tissue>Muscle</tissue>
    </source>
</reference>
<reference key="2">
    <citation type="journal article" date="1997" name="Eur. J. Biochem.">
        <title>The subunit structure of cytochrome-c oxidase from tuna heart and liver.</title>
        <authorList>
            <person name="Arnold S."/>
            <person name="Lee I."/>
            <person name="Kim M."/>
            <person name="Song E."/>
            <person name="Linder D."/>
            <person name="Lottspeich F."/>
            <person name="Kadenbach B."/>
        </authorList>
    </citation>
    <scope>PROTEIN SEQUENCE OF 29-38</scope>
    <source>
        <tissue>Heart</tissue>
        <tissue>Liver</tissue>
    </source>
</reference>
<name>COX42_THUOB</name>
<sequence>MLRLTAGRVRSLLAGRATAAFSTSSARMASHDLEVAESVDMSKPLYWDRLDTPLPDRPYKEDLTAADKSLKQKEKGPWGQLSKEEKIALYRLMFCQTYSEMKQPSSEWKTVFGGIFIFLGFTGLVVWWQALYVYPPRPRTFDDEWKAKQLKRMLDMRVNPIEGFSAKWDYEKGQWK</sequence>
<comment type="function">
    <text evidence="2">Component of the cytochrome c oxidase, the last enzyme in the mitochondrial electron transport chain which drives oxidative phosphorylation. The respiratory chain contains 3 multisubunit complexes succinate dehydrogenase (complex II, CII), ubiquinol-cytochrome c oxidoreductase (cytochrome b-c1 complex, complex III, CIII) and cytochrome c oxidase (complex IV, CIV), that cooperate to transfer electrons derived from NADH and succinate to molecular oxygen, creating an electrochemical gradient over the inner membrane that drives transmembrane transport and the ATP synthase. Cytochrome c oxidase is the component of the respiratory chain that catalyzes the reduction of oxygen to water. Electrons originating from reduced cytochrome c in the intermembrane space (IMS) are transferred via the dinuclear copper A center (CU(A)) of subunit 2 and heme A of subunit 1 to the active site in subunit 1, a binuclear center (BNC) formed by heme A3 and copper B (CU(B)). The BNC reduces molecular oxygen to 2 water molecules using 4 electrons from cytochrome c in the IMS and 4 protons from the mitochondrial matrix.</text>
</comment>
<comment type="pathway">
    <text evidence="2">Energy metabolism; oxidative phosphorylation.</text>
</comment>
<comment type="subunit">
    <text evidence="1">Component of the cytochrome c oxidase (complex IV, CIV), a multisubunit enzyme composed of 14 subunits. The complex is composed of a catalytic core of 3 subunits MT-CO1, MT-CO2 and MT-CO3, encoded in the mitochondrial DNA, and 11 supernumerary subunits COX4I, COX5A, COX5B, COX6A, COX6B, COX6C, COX7A, COX7B, COX7C, COX8 and NDUFA4, which are encoded in the nuclear genome. The complex exists as a monomer or a dimer and forms supercomplexes (SCs) in the inner mitochondrial membrane with NADH-ubiquinone oxidoreductase (complex I, CI) and ubiquinol-cytochrome c oxidoreductase (cytochrome b-c1 complex, complex III, CIII), resulting in different assemblies (supercomplex SCI(1)III(2)IV(1) and megacomplex MCI(2)III(2)IV(2)).</text>
</comment>
<comment type="subcellular location">
    <subcellularLocation>
        <location evidence="1">Mitochondrion inner membrane</location>
        <topology evidence="1">Single-pass membrane protein</topology>
    </subcellularLocation>
</comment>
<comment type="similarity">
    <text evidence="4">Belongs to the cytochrome c oxidase IV family.</text>
</comment>
<dbReference type="EMBL" id="AF204871">
    <property type="protein sequence ID" value="AAF79934.1"/>
    <property type="molecule type" value="mRNA"/>
</dbReference>
<dbReference type="PIR" id="S77980">
    <property type="entry name" value="S77980"/>
</dbReference>
<dbReference type="SMR" id="P80971"/>
<dbReference type="UniPathway" id="UPA00705"/>
<dbReference type="GO" id="GO:0005743">
    <property type="term" value="C:mitochondrial inner membrane"/>
    <property type="evidence" value="ECO:0007669"/>
    <property type="project" value="UniProtKB-SubCell"/>
</dbReference>
<dbReference type="GO" id="GO:0045277">
    <property type="term" value="C:respiratory chain complex IV"/>
    <property type="evidence" value="ECO:0007669"/>
    <property type="project" value="InterPro"/>
</dbReference>
<dbReference type="GO" id="GO:0006123">
    <property type="term" value="P:mitochondrial electron transport, cytochrome c to oxygen"/>
    <property type="evidence" value="ECO:0007669"/>
    <property type="project" value="InterPro"/>
</dbReference>
<dbReference type="CDD" id="cd00922">
    <property type="entry name" value="Cyt_c_Oxidase_IV"/>
    <property type="match status" value="1"/>
</dbReference>
<dbReference type="FunFam" id="1.10.442.10:FF:000001">
    <property type="entry name" value="Cytochrome c oxidase subunit 4 isoform 1"/>
    <property type="match status" value="1"/>
</dbReference>
<dbReference type="Gene3D" id="1.10.442.10">
    <property type="entry name" value="Cytochrome c oxidase subunit IV"/>
    <property type="match status" value="1"/>
</dbReference>
<dbReference type="InterPro" id="IPR013288">
    <property type="entry name" value="Cyt_c_oxidase_su4"/>
</dbReference>
<dbReference type="InterPro" id="IPR004203">
    <property type="entry name" value="Cyt_c_oxidase_su4_fam"/>
</dbReference>
<dbReference type="InterPro" id="IPR036639">
    <property type="entry name" value="Cyt_c_oxidase_su4_sf"/>
</dbReference>
<dbReference type="PANTHER" id="PTHR10707:SF15">
    <property type="entry name" value="CYTOCHROME C OXIDASE SUBUNIT 4"/>
    <property type="match status" value="1"/>
</dbReference>
<dbReference type="PANTHER" id="PTHR10707">
    <property type="entry name" value="CYTOCHROME C OXIDASE SUBUNIT IV"/>
    <property type="match status" value="1"/>
</dbReference>
<dbReference type="Pfam" id="PF02936">
    <property type="entry name" value="COX4"/>
    <property type="match status" value="1"/>
</dbReference>
<dbReference type="PRINTS" id="PR01873">
    <property type="entry name" value="CYTCOXIDASE4"/>
</dbReference>
<dbReference type="SUPFAM" id="SSF81406">
    <property type="entry name" value="Mitochondrial cytochrome c oxidase subunit IV"/>
    <property type="match status" value="1"/>
</dbReference>
<proteinExistence type="evidence at protein level"/>
<accession>P80971</accession>
<accession>Q9I8T9</accession>